<name>YPB3_LACLL</name>
<proteinExistence type="predicted"/>
<protein>
    <recommendedName>
        <fullName>Uncharacterized HTH-type transcriptional regulator in lacX 3'region</fullName>
    </recommendedName>
    <alternativeName>
        <fullName>ORF3</fullName>
    </alternativeName>
</protein>
<reference key="1">
    <citation type="journal article" date="1992" name="Gene">
        <title>Nonidentity between plasmid and chromosomal copies of ISS1-like sequences in Lactococcus lactis subsp. lactis CNRZ270 and their possible role in chromosomal integration of plasmid genes.</title>
        <authorList>
            <person name="Huang D.C."/>
            <person name="Novel M."/>
            <person name="Huang X.F."/>
            <person name="Novel G."/>
        </authorList>
    </citation>
    <scope>NUCLEOTIDE SEQUENCE [GENOMIC DNA]</scope>
    <source>
        <strain>CNRZ 270</strain>
    </source>
</reference>
<accession>P42097</accession>
<keyword id="KW-0238">DNA-binding</keyword>
<keyword id="KW-0804">Transcription</keyword>
<keyword id="KW-0805">Transcription regulation</keyword>
<sequence length="196" mass="22240">MEVYNLRNTKEKILTATEQLIYKKGYTGTSINDILDETATGKGQFYYYFDSKKEACLAVIDNHVKIWQKHLLNGILSRDESPLANLKEMLDWIYSDHAQKKIYYGCPVGNLVIELSALDEDFRKPLEQLFSDLQKKIAENLSALTGLLVKQNLPAAHAIIAQIQGSLLLLKVTQDLNVLESNFDLLKTSFEKVGEK</sequence>
<evidence type="ECO:0000255" key="1">
    <source>
        <dbReference type="PROSITE-ProRule" id="PRU00335"/>
    </source>
</evidence>
<feature type="chain" id="PRO_0000070673" description="Uncharacterized HTH-type transcriptional regulator in lacX 3'region">
    <location>
        <begin position="1"/>
        <end position="196"/>
    </location>
</feature>
<feature type="domain" description="HTH tetR-type" evidence="1">
    <location>
        <begin position="7"/>
        <end position="67"/>
    </location>
</feature>
<feature type="DNA-binding region" description="H-T-H motif" evidence="1">
    <location>
        <begin position="30"/>
        <end position="49"/>
    </location>
</feature>
<organism>
    <name type="scientific">Lactococcus lactis subsp. lactis</name>
    <name type="common">Streptococcus lactis</name>
    <dbReference type="NCBI Taxonomy" id="1360"/>
    <lineage>
        <taxon>Bacteria</taxon>
        <taxon>Bacillati</taxon>
        <taxon>Bacillota</taxon>
        <taxon>Bacilli</taxon>
        <taxon>Lactobacillales</taxon>
        <taxon>Streptococcaceae</taxon>
        <taxon>Lactococcus</taxon>
    </lineage>
</organism>
<dbReference type="EMBL" id="X60456">
    <property type="protein sequence ID" value="CAA42989.1"/>
    <property type="molecule type" value="Genomic_DNA"/>
</dbReference>
<dbReference type="PIR" id="S25784">
    <property type="entry name" value="S25784"/>
</dbReference>
<dbReference type="RefSeq" id="WP_015063504.1">
    <property type="nucleotide sequence ID" value="NZ_CAKMAV010000031.1"/>
</dbReference>
<dbReference type="SMR" id="P42097"/>
<dbReference type="GO" id="GO:0003677">
    <property type="term" value="F:DNA binding"/>
    <property type="evidence" value="ECO:0007669"/>
    <property type="project" value="UniProtKB-KW"/>
</dbReference>
<dbReference type="Gene3D" id="1.10.357.10">
    <property type="entry name" value="Tetracycline Repressor, domain 2"/>
    <property type="match status" value="1"/>
</dbReference>
<dbReference type="InterPro" id="IPR009057">
    <property type="entry name" value="Homeodomain-like_sf"/>
</dbReference>
<dbReference type="InterPro" id="IPR001647">
    <property type="entry name" value="HTH_TetR"/>
</dbReference>
<dbReference type="InterPro" id="IPR036271">
    <property type="entry name" value="Tet_transcr_reg_TetR-rel_C_sf"/>
</dbReference>
<dbReference type="InterPro" id="IPR054156">
    <property type="entry name" value="YxaF_TetR_C"/>
</dbReference>
<dbReference type="PANTHER" id="PTHR47506:SF6">
    <property type="entry name" value="HTH-TYPE TRANSCRIPTIONAL REPRESSOR NEMR"/>
    <property type="match status" value="1"/>
</dbReference>
<dbReference type="PANTHER" id="PTHR47506">
    <property type="entry name" value="TRANSCRIPTIONAL REGULATORY PROTEIN"/>
    <property type="match status" value="1"/>
</dbReference>
<dbReference type="Pfam" id="PF21993">
    <property type="entry name" value="TetR_C_13_2"/>
    <property type="match status" value="1"/>
</dbReference>
<dbReference type="Pfam" id="PF00440">
    <property type="entry name" value="TetR_N"/>
    <property type="match status" value="1"/>
</dbReference>
<dbReference type="PRINTS" id="PR00455">
    <property type="entry name" value="HTHTETR"/>
</dbReference>
<dbReference type="SUPFAM" id="SSF46689">
    <property type="entry name" value="Homeodomain-like"/>
    <property type="match status" value="1"/>
</dbReference>
<dbReference type="SUPFAM" id="SSF48498">
    <property type="entry name" value="Tetracyclin repressor-like, C-terminal domain"/>
    <property type="match status" value="1"/>
</dbReference>
<dbReference type="PROSITE" id="PS50977">
    <property type="entry name" value="HTH_TETR_2"/>
    <property type="match status" value="1"/>
</dbReference>